<feature type="chain" id="PRO_0000438414" description="Low density lipoprotein receptor adapter protein 1">
    <location>
        <begin position="1"/>
        <end position="306"/>
    </location>
</feature>
<feature type="domain" description="PID" evidence="3">
    <location>
        <begin position="44"/>
        <end position="168"/>
    </location>
</feature>
<feature type="region of interest" description="Disordered" evidence="4">
    <location>
        <begin position="178"/>
        <end position="204"/>
    </location>
</feature>
<feature type="region of interest" description="AP-2 complex binding" evidence="1">
    <location>
        <begin position="247"/>
        <end position="274"/>
    </location>
</feature>
<feature type="short sequence motif" description="Clathrin box" evidence="1">
    <location>
        <begin position="210"/>
        <end position="214"/>
    </location>
</feature>
<feature type="short sequence motif" description="[DE]-X(1,2)-F-X-X-[FL]-X-X-X-R motif" evidence="1">
    <location>
        <begin position="255"/>
        <end position="264"/>
    </location>
</feature>
<feature type="modified residue" description="N-acetylmethionine" evidence="1">
    <location>
        <position position="1"/>
    </location>
</feature>
<feature type="modified residue" description="Phosphoserine" evidence="1">
    <location>
        <position position="14"/>
    </location>
</feature>
<feature type="modified residue" description="Phosphoserine" evidence="11">
    <location>
        <position position="197"/>
    </location>
</feature>
<feature type="modified residue" description="Phosphoserine" evidence="2">
    <location>
        <position position="200"/>
    </location>
</feature>
<feature type="mutagenesis site" description="10-fold reduced affinity for LDLR." evidence="5">
    <original>T</original>
    <variation>M</variation>
    <location>
        <position position="55"/>
    </location>
</feature>
<feature type="strand" evidence="12">
    <location>
        <begin position="45"/>
        <end position="60"/>
    </location>
</feature>
<feature type="helix" evidence="12">
    <location>
        <begin position="63"/>
        <end position="79"/>
    </location>
</feature>
<feature type="strand" evidence="12">
    <location>
        <begin position="85"/>
        <end position="92"/>
    </location>
</feature>
<feature type="strand" evidence="12">
    <location>
        <begin position="95"/>
        <end position="100"/>
    </location>
</feature>
<feature type="turn" evidence="12">
    <location>
        <begin position="101"/>
        <end position="103"/>
    </location>
</feature>
<feature type="strand" evidence="12">
    <location>
        <begin position="106"/>
        <end position="111"/>
    </location>
</feature>
<feature type="helix" evidence="12">
    <location>
        <begin position="112"/>
        <end position="114"/>
    </location>
</feature>
<feature type="strand" evidence="12">
    <location>
        <begin position="115"/>
        <end position="123"/>
    </location>
</feature>
<feature type="strand" evidence="12">
    <location>
        <begin position="126"/>
        <end position="132"/>
    </location>
</feature>
<feature type="strand" evidence="12">
    <location>
        <begin position="134"/>
        <end position="137"/>
    </location>
</feature>
<feature type="strand" evidence="12">
    <location>
        <begin position="139"/>
        <end position="145"/>
    </location>
</feature>
<feature type="helix" evidence="12">
    <location>
        <begin position="149"/>
        <end position="171"/>
    </location>
</feature>
<name>ARH_RAT</name>
<organism>
    <name type="scientific">Rattus norvegicus</name>
    <name type="common">Rat</name>
    <dbReference type="NCBI Taxonomy" id="10116"/>
    <lineage>
        <taxon>Eukaryota</taxon>
        <taxon>Metazoa</taxon>
        <taxon>Chordata</taxon>
        <taxon>Craniata</taxon>
        <taxon>Vertebrata</taxon>
        <taxon>Euteleostomi</taxon>
        <taxon>Mammalia</taxon>
        <taxon>Eutheria</taxon>
        <taxon>Euarchontoglires</taxon>
        <taxon>Glires</taxon>
        <taxon>Rodentia</taxon>
        <taxon>Myomorpha</taxon>
        <taxon>Muroidea</taxon>
        <taxon>Muridae</taxon>
        <taxon>Murinae</taxon>
        <taxon>Rattus</taxon>
    </lineage>
</organism>
<gene>
    <name evidence="10" type="primary">Ldlrap1</name>
    <name evidence="7" type="synonym">Arh</name>
</gene>
<dbReference type="EMBL" id="AABR07050129">
    <property type="status" value="NOT_ANNOTATED_CDS"/>
    <property type="molecule type" value="Genomic_DNA"/>
</dbReference>
<dbReference type="PDB" id="3SO6">
    <property type="method" value="X-ray"/>
    <property type="resolution" value="1.37 A"/>
    <property type="chains" value="A=43-173"/>
</dbReference>
<dbReference type="PDBsum" id="3SO6"/>
<dbReference type="SMR" id="D3ZAR1"/>
<dbReference type="DIP" id="DIP-60041N"/>
<dbReference type="FunCoup" id="D3ZAR1">
    <property type="interactions" value="306"/>
</dbReference>
<dbReference type="IntAct" id="D3ZAR1">
    <property type="interactions" value="3"/>
</dbReference>
<dbReference type="STRING" id="10116.ENSRNOP00000000163"/>
<dbReference type="iPTMnet" id="D3ZAR1"/>
<dbReference type="PhosphoSitePlus" id="D3ZAR1"/>
<dbReference type="PaxDb" id="10116-ENSRNOP00000000163"/>
<dbReference type="PeptideAtlas" id="D3ZAR1"/>
<dbReference type="UCSC" id="RGD:1563417">
    <property type="organism name" value="rat"/>
</dbReference>
<dbReference type="AGR" id="RGD:1563417"/>
<dbReference type="RGD" id="1563417">
    <property type="gene designation" value="Ldlrap1"/>
</dbReference>
<dbReference type="VEuPathDB" id="HostDB:ENSRNOG00000000151"/>
<dbReference type="eggNOG" id="KOG3536">
    <property type="taxonomic scope" value="Eukaryota"/>
</dbReference>
<dbReference type="HOGENOM" id="CLU_078253_0_0_1"/>
<dbReference type="InParanoid" id="D3ZAR1"/>
<dbReference type="TreeFam" id="TF314159"/>
<dbReference type="Reactome" id="R-RNO-196791">
    <property type="pathway name" value="Vitamin D (calciferol) metabolism"/>
</dbReference>
<dbReference type="Reactome" id="R-RNO-8856825">
    <property type="pathway name" value="Cargo recognition for clathrin-mediated endocytosis"/>
</dbReference>
<dbReference type="Reactome" id="R-RNO-8856828">
    <property type="pathway name" value="Clathrin-mediated endocytosis"/>
</dbReference>
<dbReference type="Reactome" id="R-RNO-8964026">
    <property type="pathway name" value="Chylomicron clearance"/>
</dbReference>
<dbReference type="Reactome" id="R-RNO-8964038">
    <property type="pathway name" value="LDL clearance"/>
</dbReference>
<dbReference type="Reactome" id="R-RNO-9758890">
    <property type="pathway name" value="Transport of RCbl within the body"/>
</dbReference>
<dbReference type="EvolutionaryTrace" id="D3ZAR1"/>
<dbReference type="PRO" id="PR:D3ZAR1"/>
<dbReference type="Proteomes" id="UP000002494">
    <property type="component" value="Chromosome 5"/>
</dbReference>
<dbReference type="Bgee" id="ENSRNOG00000000151">
    <property type="expression patterns" value="Expressed in spleen and 18 other cell types or tissues"/>
</dbReference>
<dbReference type="GO" id="GO:0030424">
    <property type="term" value="C:axon"/>
    <property type="evidence" value="ECO:0000314"/>
    <property type="project" value="BHF-UCL"/>
</dbReference>
<dbReference type="GO" id="GO:0009925">
    <property type="term" value="C:basal plasma membrane"/>
    <property type="evidence" value="ECO:0000266"/>
    <property type="project" value="RGD"/>
</dbReference>
<dbReference type="GO" id="GO:0005737">
    <property type="term" value="C:cytoplasm"/>
    <property type="evidence" value="ECO:0000266"/>
    <property type="project" value="RGD"/>
</dbReference>
<dbReference type="GO" id="GO:0009898">
    <property type="term" value="C:cytoplasmic side of plasma membrane"/>
    <property type="evidence" value="ECO:0000266"/>
    <property type="project" value="RGD"/>
</dbReference>
<dbReference type="GO" id="GO:0005829">
    <property type="term" value="C:cytosol"/>
    <property type="evidence" value="ECO:0000266"/>
    <property type="project" value="RGD"/>
</dbReference>
<dbReference type="GO" id="GO:0005769">
    <property type="term" value="C:early endosome"/>
    <property type="evidence" value="ECO:0000266"/>
    <property type="project" value="RGD"/>
</dbReference>
<dbReference type="GO" id="GO:0005883">
    <property type="term" value="C:neurofilament"/>
    <property type="evidence" value="ECO:0000266"/>
    <property type="project" value="RGD"/>
</dbReference>
<dbReference type="GO" id="GO:0055037">
    <property type="term" value="C:recycling endosome"/>
    <property type="evidence" value="ECO:0000266"/>
    <property type="project" value="RGD"/>
</dbReference>
<dbReference type="GO" id="GO:0001540">
    <property type="term" value="F:amyloid-beta binding"/>
    <property type="evidence" value="ECO:0000266"/>
    <property type="project" value="RGD"/>
</dbReference>
<dbReference type="GO" id="GO:0035650">
    <property type="term" value="F:AP-1 adaptor complex binding"/>
    <property type="evidence" value="ECO:0000266"/>
    <property type="project" value="RGD"/>
</dbReference>
<dbReference type="GO" id="GO:0035612">
    <property type="term" value="F:AP-2 adaptor complex binding"/>
    <property type="evidence" value="ECO:0000266"/>
    <property type="project" value="RGD"/>
</dbReference>
<dbReference type="GO" id="GO:0035615">
    <property type="term" value="F:clathrin adaptor activity"/>
    <property type="evidence" value="ECO:0000266"/>
    <property type="project" value="RGD"/>
</dbReference>
<dbReference type="GO" id="GO:0030276">
    <property type="term" value="F:clathrin binding"/>
    <property type="evidence" value="ECO:0000266"/>
    <property type="project" value="RGD"/>
</dbReference>
<dbReference type="GO" id="GO:0050750">
    <property type="term" value="F:low-density lipoprotein particle receptor binding"/>
    <property type="evidence" value="ECO:0000266"/>
    <property type="project" value="RGD"/>
</dbReference>
<dbReference type="GO" id="GO:0005546">
    <property type="term" value="F:phosphatidylinositol-4,5-bisphosphate binding"/>
    <property type="evidence" value="ECO:0000266"/>
    <property type="project" value="RGD"/>
</dbReference>
<dbReference type="GO" id="GO:0001784">
    <property type="term" value="F:phosphotyrosine residue binding"/>
    <property type="evidence" value="ECO:0000266"/>
    <property type="project" value="RGD"/>
</dbReference>
<dbReference type="GO" id="GO:0035591">
    <property type="term" value="F:signaling adaptor activity"/>
    <property type="evidence" value="ECO:0000266"/>
    <property type="project" value="RGD"/>
</dbReference>
<dbReference type="GO" id="GO:0030159">
    <property type="term" value="F:signaling receptor complex adaptor activity"/>
    <property type="evidence" value="ECO:0000266"/>
    <property type="project" value="RGD"/>
</dbReference>
<dbReference type="GO" id="GO:0042982">
    <property type="term" value="P:amyloid precursor protein metabolic process"/>
    <property type="evidence" value="ECO:0000266"/>
    <property type="project" value="RGD"/>
</dbReference>
<dbReference type="GO" id="GO:0071345">
    <property type="term" value="P:cellular response to cytokine stimulus"/>
    <property type="evidence" value="ECO:0000266"/>
    <property type="project" value="RGD"/>
</dbReference>
<dbReference type="GO" id="GO:0042632">
    <property type="term" value="P:cholesterol homeostasis"/>
    <property type="evidence" value="ECO:0000266"/>
    <property type="project" value="RGD"/>
</dbReference>
<dbReference type="GO" id="GO:0008203">
    <property type="term" value="P:cholesterol metabolic process"/>
    <property type="evidence" value="ECO:0007669"/>
    <property type="project" value="UniProtKB-KW"/>
</dbReference>
<dbReference type="GO" id="GO:0034383">
    <property type="term" value="P:low-density lipoprotein particle clearance"/>
    <property type="evidence" value="ECO:0000266"/>
    <property type="project" value="RGD"/>
</dbReference>
<dbReference type="GO" id="GO:1905581">
    <property type="term" value="P:positive regulation of low-density lipoprotein particle clearance"/>
    <property type="evidence" value="ECO:0000266"/>
    <property type="project" value="RGD"/>
</dbReference>
<dbReference type="GO" id="GO:0048260">
    <property type="term" value="P:positive regulation of receptor-mediated endocytosis"/>
    <property type="evidence" value="ECO:0000266"/>
    <property type="project" value="RGD"/>
</dbReference>
<dbReference type="GO" id="GO:1905602">
    <property type="term" value="P:positive regulation of receptor-mediated endocytosis involved in cholesterol transport"/>
    <property type="evidence" value="ECO:0000266"/>
    <property type="project" value="RGD"/>
</dbReference>
<dbReference type="GO" id="GO:1904707">
    <property type="term" value="P:positive regulation of vascular associated smooth muscle cell proliferation"/>
    <property type="evidence" value="ECO:0000266"/>
    <property type="project" value="RGD"/>
</dbReference>
<dbReference type="GO" id="GO:0031623">
    <property type="term" value="P:receptor internalization"/>
    <property type="evidence" value="ECO:0000266"/>
    <property type="project" value="RGD"/>
</dbReference>
<dbReference type="GO" id="GO:0006898">
    <property type="term" value="P:receptor-mediated endocytosis"/>
    <property type="evidence" value="ECO:0000266"/>
    <property type="project" value="RGD"/>
</dbReference>
<dbReference type="GO" id="GO:0090118">
    <property type="term" value="P:receptor-mediated endocytosis involved in cholesterol transport"/>
    <property type="evidence" value="ECO:0000266"/>
    <property type="project" value="RGD"/>
</dbReference>
<dbReference type="GO" id="GO:1903076">
    <property type="term" value="P:regulation of protein localization to plasma membrane"/>
    <property type="evidence" value="ECO:0000266"/>
    <property type="project" value="RGD"/>
</dbReference>
<dbReference type="CDD" id="cd13159">
    <property type="entry name" value="PTB_LDLRAP-mammal-like"/>
    <property type="match status" value="1"/>
</dbReference>
<dbReference type="FunFam" id="2.30.29.30:FF:000137">
    <property type="entry name" value="Low density lipoprotein receptor adapter protein 1"/>
    <property type="match status" value="1"/>
</dbReference>
<dbReference type="Gene3D" id="2.30.29.30">
    <property type="entry name" value="Pleckstrin-homology domain (PH domain)/Phosphotyrosine-binding domain (PTB)"/>
    <property type="match status" value="1"/>
</dbReference>
<dbReference type="IDEAL" id="IID50263"/>
<dbReference type="InterPro" id="IPR051133">
    <property type="entry name" value="Adapter_Engulfment-Domain"/>
</dbReference>
<dbReference type="InterPro" id="IPR011993">
    <property type="entry name" value="PH-like_dom_sf"/>
</dbReference>
<dbReference type="InterPro" id="IPR006020">
    <property type="entry name" value="PTB/PI_dom"/>
</dbReference>
<dbReference type="PANTHER" id="PTHR11232:SF35">
    <property type="entry name" value="LOW DENSITY LIPOPROTEIN RECEPTOR ADAPTER PROTEIN 1"/>
    <property type="match status" value="1"/>
</dbReference>
<dbReference type="PANTHER" id="PTHR11232">
    <property type="entry name" value="PHOSPHOTYROSINE INTERACTION DOMAIN-CONTAINING FAMILY MEMBER"/>
    <property type="match status" value="1"/>
</dbReference>
<dbReference type="Pfam" id="PF00640">
    <property type="entry name" value="PID"/>
    <property type="match status" value="1"/>
</dbReference>
<dbReference type="SMART" id="SM00462">
    <property type="entry name" value="PTB"/>
    <property type="match status" value="1"/>
</dbReference>
<dbReference type="SUPFAM" id="SSF50729">
    <property type="entry name" value="PH domain-like"/>
    <property type="match status" value="1"/>
</dbReference>
<dbReference type="PROSITE" id="PS01179">
    <property type="entry name" value="PID"/>
    <property type="match status" value="1"/>
</dbReference>
<proteinExistence type="evidence at protein level"/>
<evidence type="ECO:0000250" key="1">
    <source>
        <dbReference type="UniProtKB" id="Q5SW96"/>
    </source>
</evidence>
<evidence type="ECO:0000250" key="2">
    <source>
        <dbReference type="UniProtKB" id="Q8C142"/>
    </source>
</evidence>
<evidence type="ECO:0000255" key="3">
    <source>
        <dbReference type="PROSITE-ProRule" id="PRU00148"/>
    </source>
</evidence>
<evidence type="ECO:0000256" key="4">
    <source>
        <dbReference type="SAM" id="MobiDB-lite"/>
    </source>
</evidence>
<evidence type="ECO:0000269" key="5">
    <source>
    </source>
</evidence>
<evidence type="ECO:0000269" key="6">
    <source>
    </source>
</evidence>
<evidence type="ECO:0000303" key="7">
    <source>
    </source>
</evidence>
<evidence type="ECO:0000305" key="8"/>
<evidence type="ECO:0000305" key="9">
    <source>
    </source>
</evidence>
<evidence type="ECO:0000312" key="10">
    <source>
        <dbReference type="RGD" id="1563417"/>
    </source>
</evidence>
<evidence type="ECO:0007744" key="11">
    <source>
    </source>
</evidence>
<evidence type="ECO:0007829" key="12">
    <source>
        <dbReference type="PDB" id="3SO6"/>
    </source>
</evidence>
<accession>D3ZAR1</accession>
<keyword id="KW-0002">3D-structure</keyword>
<keyword id="KW-0007">Acetylation</keyword>
<keyword id="KW-0153">Cholesterol metabolism</keyword>
<keyword id="KW-0963">Cytoplasm</keyword>
<keyword id="KW-0254">Endocytosis</keyword>
<keyword id="KW-0443">Lipid metabolism</keyword>
<keyword id="KW-0597">Phosphoprotein</keyword>
<keyword id="KW-1185">Reference proteome</keyword>
<keyword id="KW-0753">Steroid metabolism</keyword>
<keyword id="KW-1207">Sterol metabolism</keyword>
<protein>
    <recommendedName>
        <fullName evidence="8">Low density lipoprotein receptor adapter protein 1</fullName>
    </recommendedName>
    <alternativeName>
        <fullName evidence="9">Autosomal recessive hypercholesterolemia protein homolog</fullName>
    </alternativeName>
</protein>
<reference key="1">
    <citation type="journal article" date="2004" name="Nature">
        <title>Genome sequence of the Brown Norway rat yields insights into mammalian evolution.</title>
        <authorList>
            <person name="Gibbs R.A."/>
            <person name="Weinstock G.M."/>
            <person name="Metzker M.L."/>
            <person name="Muzny D.M."/>
            <person name="Sodergren E.J."/>
            <person name="Scherer S."/>
            <person name="Scott G."/>
            <person name="Steffen D."/>
            <person name="Worley K.C."/>
            <person name="Burch P.E."/>
            <person name="Okwuonu G."/>
            <person name="Hines S."/>
            <person name="Lewis L."/>
            <person name="Deramo C."/>
            <person name="Delgado O."/>
            <person name="Dugan-Rocha S."/>
            <person name="Miner G."/>
            <person name="Morgan M."/>
            <person name="Hawes A."/>
            <person name="Gill R."/>
            <person name="Holt R.A."/>
            <person name="Adams M.D."/>
            <person name="Amanatides P.G."/>
            <person name="Baden-Tillson H."/>
            <person name="Barnstead M."/>
            <person name="Chin S."/>
            <person name="Evans C.A."/>
            <person name="Ferriera S."/>
            <person name="Fosler C."/>
            <person name="Glodek A."/>
            <person name="Gu Z."/>
            <person name="Jennings D."/>
            <person name="Kraft C.L."/>
            <person name="Nguyen T."/>
            <person name="Pfannkoch C.M."/>
            <person name="Sitter C."/>
            <person name="Sutton G.G."/>
            <person name="Venter J.C."/>
            <person name="Woodage T."/>
            <person name="Smith D."/>
            <person name="Lee H.-M."/>
            <person name="Gustafson E."/>
            <person name="Cahill P."/>
            <person name="Kana A."/>
            <person name="Doucette-Stamm L."/>
            <person name="Weinstock K."/>
            <person name="Fechtel K."/>
            <person name="Weiss R.B."/>
            <person name="Dunn D.M."/>
            <person name="Green E.D."/>
            <person name="Blakesley R.W."/>
            <person name="Bouffard G.G."/>
            <person name="De Jong P.J."/>
            <person name="Osoegawa K."/>
            <person name="Zhu B."/>
            <person name="Marra M."/>
            <person name="Schein J."/>
            <person name="Bosdet I."/>
            <person name="Fjell C."/>
            <person name="Jones S."/>
            <person name="Krzywinski M."/>
            <person name="Mathewson C."/>
            <person name="Siddiqui A."/>
            <person name="Wye N."/>
            <person name="McPherson J."/>
            <person name="Zhao S."/>
            <person name="Fraser C.M."/>
            <person name="Shetty J."/>
            <person name="Shatsman S."/>
            <person name="Geer K."/>
            <person name="Chen Y."/>
            <person name="Abramzon S."/>
            <person name="Nierman W.C."/>
            <person name="Havlak P.H."/>
            <person name="Chen R."/>
            <person name="Durbin K.J."/>
            <person name="Egan A."/>
            <person name="Ren Y."/>
            <person name="Song X.-Z."/>
            <person name="Li B."/>
            <person name="Liu Y."/>
            <person name="Qin X."/>
            <person name="Cawley S."/>
            <person name="Cooney A.J."/>
            <person name="D'Souza L.M."/>
            <person name="Martin K."/>
            <person name="Wu J.Q."/>
            <person name="Gonzalez-Garay M.L."/>
            <person name="Jackson A.R."/>
            <person name="Kalafus K.J."/>
            <person name="McLeod M.P."/>
            <person name="Milosavljevic A."/>
            <person name="Virk D."/>
            <person name="Volkov A."/>
            <person name="Wheeler D.A."/>
            <person name="Zhang Z."/>
            <person name="Bailey J.A."/>
            <person name="Eichler E.E."/>
            <person name="Tuzun E."/>
            <person name="Birney E."/>
            <person name="Mongin E."/>
            <person name="Ureta-Vidal A."/>
            <person name="Woodwark C."/>
            <person name="Zdobnov E."/>
            <person name="Bork P."/>
            <person name="Suyama M."/>
            <person name="Torrents D."/>
            <person name="Alexandersson M."/>
            <person name="Trask B.J."/>
            <person name="Young J.M."/>
            <person name="Huang H."/>
            <person name="Wang H."/>
            <person name="Xing H."/>
            <person name="Daniels S."/>
            <person name="Gietzen D."/>
            <person name="Schmidt J."/>
            <person name="Stevens K."/>
            <person name="Vitt U."/>
            <person name="Wingrove J."/>
            <person name="Camara F."/>
            <person name="Mar Alba M."/>
            <person name="Abril J.F."/>
            <person name="Guigo R."/>
            <person name="Smit A."/>
            <person name="Dubchak I."/>
            <person name="Rubin E.M."/>
            <person name="Couronne O."/>
            <person name="Poliakov A."/>
            <person name="Huebner N."/>
            <person name="Ganten D."/>
            <person name="Goesele C."/>
            <person name="Hummel O."/>
            <person name="Kreitler T."/>
            <person name="Lee Y.-A."/>
            <person name="Monti J."/>
            <person name="Schulz H."/>
            <person name="Zimdahl H."/>
            <person name="Himmelbauer H."/>
            <person name="Lehrach H."/>
            <person name="Jacob H.J."/>
            <person name="Bromberg S."/>
            <person name="Gullings-Handley J."/>
            <person name="Jensen-Seaman M.I."/>
            <person name="Kwitek A.E."/>
            <person name="Lazar J."/>
            <person name="Pasko D."/>
            <person name="Tonellato P.J."/>
            <person name="Twigger S."/>
            <person name="Ponting C.P."/>
            <person name="Duarte J.M."/>
            <person name="Rice S."/>
            <person name="Goodstadt L."/>
            <person name="Beatson S.A."/>
            <person name="Emes R.D."/>
            <person name="Winter E.E."/>
            <person name="Webber C."/>
            <person name="Brandt P."/>
            <person name="Nyakatura G."/>
            <person name="Adetobi M."/>
            <person name="Chiaromonte F."/>
            <person name="Elnitski L."/>
            <person name="Eswara P."/>
            <person name="Hardison R.C."/>
            <person name="Hou M."/>
            <person name="Kolbe D."/>
            <person name="Makova K."/>
            <person name="Miller W."/>
            <person name="Nekrutenko A."/>
            <person name="Riemer C."/>
            <person name="Schwartz S."/>
            <person name="Taylor J."/>
            <person name="Yang S."/>
            <person name="Zhang Y."/>
            <person name="Lindpaintner K."/>
            <person name="Andrews T.D."/>
            <person name="Caccamo M."/>
            <person name="Clamp M."/>
            <person name="Clarke L."/>
            <person name="Curwen V."/>
            <person name="Durbin R.M."/>
            <person name="Eyras E."/>
            <person name="Searle S.M."/>
            <person name="Cooper G.M."/>
            <person name="Batzoglou S."/>
            <person name="Brudno M."/>
            <person name="Sidow A."/>
            <person name="Stone E.A."/>
            <person name="Payseur B.A."/>
            <person name="Bourque G."/>
            <person name="Lopez-Otin C."/>
            <person name="Puente X.S."/>
            <person name="Chakrabarti K."/>
            <person name="Chatterji S."/>
            <person name="Dewey C."/>
            <person name="Pachter L."/>
            <person name="Bray N."/>
            <person name="Yap V.B."/>
            <person name="Caspi A."/>
            <person name="Tesler G."/>
            <person name="Pevzner P.A."/>
            <person name="Haussler D."/>
            <person name="Roskin K.M."/>
            <person name="Baertsch R."/>
            <person name="Clawson H."/>
            <person name="Furey T.S."/>
            <person name="Hinrichs A.S."/>
            <person name="Karolchik D."/>
            <person name="Kent W.J."/>
            <person name="Rosenbloom K.R."/>
            <person name="Trumbower H."/>
            <person name="Weirauch M."/>
            <person name="Cooper D.N."/>
            <person name="Stenson P.D."/>
            <person name="Ma B."/>
            <person name="Brent M."/>
            <person name="Arumugam M."/>
            <person name="Shteynberg D."/>
            <person name="Copley R.R."/>
            <person name="Taylor M.S."/>
            <person name="Riethman H."/>
            <person name="Mudunuri U."/>
            <person name="Peterson J."/>
            <person name="Guyer M."/>
            <person name="Felsenfeld A."/>
            <person name="Old S."/>
            <person name="Mockrin S."/>
            <person name="Collins F.S."/>
        </authorList>
    </citation>
    <scope>NUCLEOTIDE SEQUENCE [LARGE SCALE GENOMIC DNA]</scope>
    <source>
        <strain>Brown Norway</strain>
    </source>
</reference>
<reference key="2">
    <citation type="journal article" date="2012" name="Nat. Commun.">
        <title>Quantitative maps of protein phosphorylation sites across 14 different rat organs and tissues.</title>
        <authorList>
            <person name="Lundby A."/>
            <person name="Secher A."/>
            <person name="Lage K."/>
            <person name="Nordsborg N.B."/>
            <person name="Dmytriyev A."/>
            <person name="Lundby C."/>
            <person name="Olsen J.V."/>
        </authorList>
    </citation>
    <scope>PHOSPHORYLATION [LARGE SCALE ANALYSIS] AT SER-197</scope>
    <scope>IDENTIFICATION BY MASS SPECTROMETRY [LARGE SCALE ANALYSIS]</scope>
</reference>
<reference key="3">
    <citation type="journal article" date="2013" name="J. Cell Biol.">
        <title>ARH directs megalin to the endocytic recycling compartment to regulate its proteolysis and gene expression.</title>
        <authorList>
            <person name="Shah M."/>
            <person name="Baterina O.Y. Jr."/>
            <person name="Taupin V."/>
            <person name="Farquhar M.G."/>
        </authorList>
    </citation>
    <scope>FUNCTION</scope>
    <scope>INTERACTION WITH LRP2</scope>
</reference>
<reference key="4">
    <citation type="journal article" date="2012" name="Proc. Natl. Acad. Sci. U.S.A.">
        <title>Atomic structure of the autosomal recessive hypercholesterolemia phosphotyrosine-binding domain in complex with the LDL-receptor tail.</title>
        <authorList>
            <person name="Dvir H."/>
            <person name="Shah M."/>
            <person name="Girardi E."/>
            <person name="Guo L."/>
            <person name="Farquhar M.G."/>
            <person name="Zajonc D.M."/>
        </authorList>
    </citation>
    <scope>X-RAY CRYSTALLOGRAPHY (1.37 ANGSTROMS) OF 43-173 IN COMPLEX WITH LDLR</scope>
    <scope>INTERACTION WITH LDLR</scope>
    <scope>DOMAIN</scope>
    <scope>MUTAGENESIS OF THR-55</scope>
</reference>
<sequence length="306" mass="33785">MDALKSAGRALIRSPSLAKQSWAGGRHRKLPENWTDTRETLLEGMVFSLKYLGMTLVERPKGEELSAAAVKRIVATAKASGKKLQKVTLKVSPRGIILTDSLTSQLIENVSIYRISYCTAQMHDKVFAYIAQSQQNESLECHAFLCTKRKVAQAVTLTVAQAFKVAFEFWQVSKEEKEKREKANQEGGDVPGTRRDSTPSLKTSVATGNLLDLEELAKAPLSTVSANTKNMDDALRPQVLGNNSVVWELDDGLDEAFSRLAQSRTNPQVLDTGLTAQDIHYAQCLSPTDWDKPDSSGFDQDDVFSF</sequence>
<comment type="function">
    <text evidence="2 6">Adapter protein (clathrin-associated sorting protein (CLASP)) required for efficient endocytosis of the LDL receptor (LDLR) in polarized cells such as hepatocytes and lymphocytes, but not in non-polarized cells (fibroblasts). May be required for LDL binding and internalization but not for receptor clustering in coated pits. May facilitate the endocytosis of LDLR and LDLR-LDL complexes from coated pits by stabilizing the interaction between the receptor and the structural components of the pits. May also be involved in the internalization of other LDLR family members. Binds to phosphoinositides, which regulate clathrin bud assembly at the cell surface (By similarity). Required for trafficking of LRP2 to the endocytic recycling compartment which is necessary for LRP2 proteolysis, releasing a tail fragment which translocates to the nucleus and mediates transcriptional repression (PubMed:23836931).</text>
</comment>
<comment type="subunit">
    <text evidence="1 2 5 6">Interacts (via PID domain) with LDLR (via NPXY motifs) (PubMed:22509010). Binds to soluble clathrin trimers (By similarity). Interacts with AP2B1; the interaction mediates the association with the AP-2 complex (By similarity). Interacts with VLDLR (By similarity). Interacts with LRP2 (PubMed:23836931).</text>
</comment>
<comment type="interaction">
    <interactant intactId="EBI-9250714">
        <id>D3ZAR1</id>
    </interactant>
    <interactant intactId="EBI-9251342">
        <id>PRO_0000017322</id>
        <label>Lrp2</label>
        <dbReference type="UniProtKB" id="P98158"/>
    </interactant>
    <organismsDiffer>false</organismsDiffer>
    <experiments>3</experiments>
</comment>
<comment type="interaction">
    <interactant intactId="EBI-9250714">
        <id>D3ZAR1</id>
    </interactant>
    <interactant intactId="EBI-988319">
        <id>P01130</id>
        <label>LDLR</label>
    </interactant>
    <organismsDiffer>true</organismsDiffer>
    <experiments>3</experiments>
</comment>
<comment type="subcellular location">
    <subcellularLocation>
        <location evidence="2">Cytoplasm</location>
    </subcellularLocation>
</comment>
<comment type="domain">
    <text evidence="1">The [DE]-X(1,2)-F-X-X-[FL]-X-X-X-R motif mediates interaction the AP-2 complex subunit AP2B1.</text>
</comment>
<comment type="domain">
    <text evidence="5">The PID domain mediates interaction with the NPXY internalization motif of LDLR.</text>
</comment>